<keyword id="KW-0004">4Fe-4S</keyword>
<keyword id="KW-0067">ATP-binding</keyword>
<keyword id="KW-0963">Cytoplasm</keyword>
<keyword id="KW-0408">Iron</keyword>
<keyword id="KW-0411">Iron-sulfur</keyword>
<keyword id="KW-0479">Metal-binding</keyword>
<keyword id="KW-0547">Nucleotide-binding</keyword>
<keyword id="KW-1185">Reference proteome</keyword>
<comment type="function">
    <text evidence="2">Component of the cytosolic iron-sulfur (Fe/S) protein assembly (CIA) machinery. Required for maturation of extramitochondrial Fe-S proteins. The Nubp1-Nubp2 heterotetramer forms a Fe-S scaffold complex, mediating the de novo assembly of an Fe-S cluster and its transfer to target apoproteins.</text>
</comment>
<comment type="cofactor">
    <cofactor evidence="2">
        <name>[4Fe-4S] cluster</name>
        <dbReference type="ChEBI" id="CHEBI:49883"/>
    </cofactor>
    <text evidence="2">Binds 4 [4Fe-4S] clusters per heterotetramer. Contains two stable clusters in the N-termini of Nubp1 and two labile, bridging clusters between subunits of the Nubp1-Nubp2 heterotetramer.</text>
</comment>
<comment type="subunit">
    <text evidence="2">Heterotetramer of 2 Nubp1 and 2 Nubp2 chains.</text>
</comment>
<comment type="subcellular location">
    <subcellularLocation>
        <location evidence="2">Cytoplasm</location>
    </subcellularLocation>
</comment>
<comment type="similarity">
    <text evidence="2">Belongs to the Mrp/NBP35 ATP-binding proteins family. NUBP2/CFD1 subfamily.</text>
</comment>
<reference key="1">
    <citation type="journal article" date="2005" name="Genome Res.">
        <title>Comparative genome sequencing of Drosophila pseudoobscura: chromosomal, gene, and cis-element evolution.</title>
        <authorList>
            <person name="Richards S."/>
            <person name="Liu Y."/>
            <person name="Bettencourt B.R."/>
            <person name="Hradecky P."/>
            <person name="Letovsky S."/>
            <person name="Nielsen R."/>
            <person name="Thornton K."/>
            <person name="Hubisz M.J."/>
            <person name="Chen R."/>
            <person name="Meisel R.P."/>
            <person name="Couronne O."/>
            <person name="Hua S."/>
            <person name="Smith M.A."/>
            <person name="Zhang P."/>
            <person name="Liu J."/>
            <person name="Bussemaker H.J."/>
            <person name="van Batenburg M.F."/>
            <person name="Howells S.L."/>
            <person name="Scherer S.E."/>
            <person name="Sodergren E."/>
            <person name="Matthews B.B."/>
            <person name="Crosby M.A."/>
            <person name="Schroeder A.J."/>
            <person name="Ortiz-Barrientos D."/>
            <person name="Rives C.M."/>
            <person name="Metzker M.L."/>
            <person name="Muzny D.M."/>
            <person name="Scott G."/>
            <person name="Steffen D."/>
            <person name="Wheeler D.A."/>
            <person name="Worley K.C."/>
            <person name="Havlak P."/>
            <person name="Durbin K.J."/>
            <person name="Egan A."/>
            <person name="Gill R."/>
            <person name="Hume J."/>
            <person name="Morgan M.B."/>
            <person name="Miner G."/>
            <person name="Hamilton C."/>
            <person name="Huang Y."/>
            <person name="Waldron L."/>
            <person name="Verduzco D."/>
            <person name="Clerc-Blankenburg K.P."/>
            <person name="Dubchak I."/>
            <person name="Noor M.A.F."/>
            <person name="Anderson W."/>
            <person name="White K.P."/>
            <person name="Clark A.G."/>
            <person name="Schaeffer S.W."/>
            <person name="Gelbart W.M."/>
            <person name="Weinstock G.M."/>
            <person name="Gibbs R.A."/>
        </authorList>
    </citation>
    <scope>NUCLEOTIDE SEQUENCE [LARGE SCALE GENOMIC DNA]</scope>
    <source>
        <strain>MV2-25 / Tucson 14011-0121.94</strain>
    </source>
</reference>
<organism>
    <name type="scientific">Drosophila pseudoobscura pseudoobscura</name>
    <name type="common">Fruit fly</name>
    <dbReference type="NCBI Taxonomy" id="46245"/>
    <lineage>
        <taxon>Eukaryota</taxon>
        <taxon>Metazoa</taxon>
        <taxon>Ecdysozoa</taxon>
        <taxon>Arthropoda</taxon>
        <taxon>Hexapoda</taxon>
        <taxon>Insecta</taxon>
        <taxon>Pterygota</taxon>
        <taxon>Neoptera</taxon>
        <taxon>Endopterygota</taxon>
        <taxon>Diptera</taxon>
        <taxon>Brachycera</taxon>
        <taxon>Muscomorpha</taxon>
        <taxon>Ephydroidea</taxon>
        <taxon>Drosophilidae</taxon>
        <taxon>Drosophila</taxon>
        <taxon>Sophophora</taxon>
    </lineage>
</organism>
<feature type="chain" id="PRO_0000382714" description="Cytosolic Fe-S cluster assembly factor Nubp2 homolog">
    <location>
        <begin position="1"/>
        <end position="258"/>
    </location>
</feature>
<feature type="binding site" evidence="2">
    <location>
        <begin position="14"/>
        <end position="21"/>
    </location>
    <ligand>
        <name>ATP</name>
        <dbReference type="ChEBI" id="CHEBI:30616"/>
    </ligand>
</feature>
<feature type="binding site" evidence="2">
    <location>
        <position position="188"/>
    </location>
    <ligand>
        <name>[4Fe-4S] cluster</name>
        <dbReference type="ChEBI" id="CHEBI:49883"/>
        <note>ligand shared between dimeric partners</note>
    </ligand>
</feature>
<feature type="binding site" evidence="2">
    <location>
        <position position="191"/>
    </location>
    <ligand>
        <name>[4Fe-4S] cluster</name>
        <dbReference type="ChEBI" id="CHEBI:49883"/>
        <note>ligand shared between dimeric partners</note>
    </ligand>
</feature>
<sequence>MLDKVKNVIIVLSGKGGVGKSTVSTQLALALRHSGHKVGLLDIDLCGPSVPFLLGLEGSNIYQCDEGWVPIYTDASKTLAVMSIGFLLKNRTDPVIWRGPKKTMMIRQFLTDVKWEELDYLIIDTPPGTSDEHITVMECMREVPCNGAIIVTTPQSVALDDVRKEITFCKKTGIKLLGIVENMSGFVCPNCTNCTNIFSSNGGVELAHLVQIPHLGTLPIDPRVGVLAGSTASVLDELPDSPTAQVLRGIVQHLVALT</sequence>
<gene>
    <name evidence="1" type="primary">Nubp2</name>
    <name type="ORF">GA18483</name>
</gene>
<accession>Q29DB7</accession>
<dbReference type="EMBL" id="CH379070">
    <property type="protein sequence ID" value="EAL30497.2"/>
    <property type="molecule type" value="Genomic_DNA"/>
</dbReference>
<dbReference type="RefSeq" id="XP_001352996.2">
    <property type="nucleotide sequence ID" value="XM_001352960.3"/>
</dbReference>
<dbReference type="RefSeq" id="XP_015044072.1">
    <property type="nucleotide sequence ID" value="XM_015188586.1"/>
</dbReference>
<dbReference type="SMR" id="Q29DB7"/>
<dbReference type="FunCoup" id="Q29DB7">
    <property type="interactions" value="260"/>
</dbReference>
<dbReference type="STRING" id="46245.Q29DB7"/>
<dbReference type="EnsemblMetazoa" id="FBtr0288654">
    <property type="protein sequence ID" value="FBpp0287092"/>
    <property type="gene ID" value="FBgn0078485"/>
</dbReference>
<dbReference type="EnsemblMetazoa" id="FBtr0375748">
    <property type="protein sequence ID" value="FBpp0337096"/>
    <property type="gene ID" value="FBgn0078485"/>
</dbReference>
<dbReference type="GeneID" id="4812133"/>
<dbReference type="KEGG" id="dpo:4812133"/>
<dbReference type="CTD" id="10101"/>
<dbReference type="eggNOG" id="KOG3022">
    <property type="taxonomic scope" value="Eukaryota"/>
</dbReference>
<dbReference type="HOGENOM" id="CLU_024839_0_1_1"/>
<dbReference type="InParanoid" id="Q29DB7"/>
<dbReference type="OMA" id="WIPVFAD"/>
<dbReference type="Proteomes" id="UP000001819">
    <property type="component" value="Chromosome X"/>
</dbReference>
<dbReference type="Bgee" id="FBgn0078485">
    <property type="expression patterns" value="Expressed in insect adult head and 2 other cell types or tissues"/>
</dbReference>
<dbReference type="ExpressionAtlas" id="Q29DB7">
    <property type="expression patterns" value="baseline"/>
</dbReference>
<dbReference type="GO" id="GO:0005829">
    <property type="term" value="C:cytosol"/>
    <property type="evidence" value="ECO:0007669"/>
    <property type="project" value="TreeGrafter"/>
</dbReference>
<dbReference type="GO" id="GO:0051539">
    <property type="term" value="F:4 iron, 4 sulfur cluster binding"/>
    <property type="evidence" value="ECO:0007669"/>
    <property type="project" value="UniProtKB-UniRule"/>
</dbReference>
<dbReference type="GO" id="GO:0005524">
    <property type="term" value="F:ATP binding"/>
    <property type="evidence" value="ECO:0007669"/>
    <property type="project" value="UniProtKB-KW"/>
</dbReference>
<dbReference type="GO" id="GO:0140663">
    <property type="term" value="F:ATP-dependent FeS chaperone activity"/>
    <property type="evidence" value="ECO:0007669"/>
    <property type="project" value="InterPro"/>
</dbReference>
<dbReference type="GO" id="GO:0046872">
    <property type="term" value="F:metal ion binding"/>
    <property type="evidence" value="ECO:0007669"/>
    <property type="project" value="UniProtKB-KW"/>
</dbReference>
<dbReference type="GO" id="GO:0016226">
    <property type="term" value="P:iron-sulfur cluster assembly"/>
    <property type="evidence" value="ECO:0007669"/>
    <property type="project" value="UniProtKB-UniRule"/>
</dbReference>
<dbReference type="CDD" id="cd02037">
    <property type="entry name" value="Mrp_NBP35"/>
    <property type="match status" value="1"/>
</dbReference>
<dbReference type="FunFam" id="3.40.50.300:FF:000796">
    <property type="entry name" value="Cytosolic Fe-S cluster assembly factor NUBP2"/>
    <property type="match status" value="1"/>
</dbReference>
<dbReference type="Gene3D" id="3.40.50.300">
    <property type="entry name" value="P-loop containing nucleotide triphosphate hydrolases"/>
    <property type="match status" value="1"/>
</dbReference>
<dbReference type="HAMAP" id="MF_02040">
    <property type="entry name" value="Mrp_NBP35"/>
    <property type="match status" value="1"/>
</dbReference>
<dbReference type="HAMAP" id="MF_03039">
    <property type="entry name" value="NUBP2"/>
    <property type="match status" value="1"/>
</dbReference>
<dbReference type="InterPro" id="IPR000808">
    <property type="entry name" value="Mrp-like_CS"/>
</dbReference>
<dbReference type="InterPro" id="IPR019591">
    <property type="entry name" value="Mrp/NBP35_ATP-bd"/>
</dbReference>
<dbReference type="InterPro" id="IPR028600">
    <property type="entry name" value="NUBP2/Cfd1_eukaryotes"/>
</dbReference>
<dbReference type="InterPro" id="IPR027417">
    <property type="entry name" value="P-loop_NTPase"/>
</dbReference>
<dbReference type="InterPro" id="IPR033756">
    <property type="entry name" value="YlxH/NBP35"/>
</dbReference>
<dbReference type="PANTHER" id="PTHR23264:SF19">
    <property type="entry name" value="CYTOSOLIC FE-S CLUSTER ASSEMBLY FACTOR NUBP2"/>
    <property type="match status" value="1"/>
</dbReference>
<dbReference type="PANTHER" id="PTHR23264">
    <property type="entry name" value="NUCLEOTIDE-BINDING PROTEIN NBP35 YEAST -RELATED"/>
    <property type="match status" value="1"/>
</dbReference>
<dbReference type="Pfam" id="PF10609">
    <property type="entry name" value="ParA"/>
    <property type="match status" value="1"/>
</dbReference>
<dbReference type="SUPFAM" id="SSF52540">
    <property type="entry name" value="P-loop containing nucleoside triphosphate hydrolases"/>
    <property type="match status" value="1"/>
</dbReference>
<dbReference type="PROSITE" id="PS01215">
    <property type="entry name" value="MRP"/>
    <property type="match status" value="1"/>
</dbReference>
<name>NUBP2_DROPS</name>
<protein>
    <recommendedName>
        <fullName evidence="2">Cytosolic Fe-S cluster assembly factor Nubp2 homolog</fullName>
    </recommendedName>
</protein>
<proteinExistence type="inferred from homology"/>
<evidence type="ECO:0000250" key="1">
    <source>
        <dbReference type="UniProtKB" id="Q9VPD2"/>
    </source>
</evidence>
<evidence type="ECO:0000255" key="2">
    <source>
        <dbReference type="HAMAP-Rule" id="MF_03039"/>
    </source>
</evidence>